<name>METK_PSEAB</name>
<protein>
    <recommendedName>
        <fullName evidence="1">S-adenosylmethionine synthase</fullName>
        <shortName evidence="1">AdoMet synthase</shortName>
        <ecNumber evidence="1">2.5.1.6</ecNumber>
    </recommendedName>
    <alternativeName>
        <fullName evidence="1">MAT</fullName>
    </alternativeName>
    <alternativeName>
        <fullName evidence="1">Methionine adenosyltransferase</fullName>
    </alternativeName>
</protein>
<dbReference type="EC" id="2.5.1.6" evidence="1"/>
<dbReference type="EMBL" id="CP000438">
    <property type="protein sequence ID" value="ABJ15509.1"/>
    <property type="molecule type" value="Genomic_DNA"/>
</dbReference>
<dbReference type="RefSeq" id="WP_003084948.1">
    <property type="nucleotide sequence ID" value="NZ_CP034244.1"/>
</dbReference>
<dbReference type="SMR" id="Q02TL9"/>
<dbReference type="GeneID" id="77219067"/>
<dbReference type="KEGG" id="pau:PA14_07090"/>
<dbReference type="PseudoCAP" id="PA14_07090"/>
<dbReference type="HOGENOM" id="CLU_041802_1_1_6"/>
<dbReference type="BioCyc" id="PAER208963:G1G74-587-MONOMER"/>
<dbReference type="UniPathway" id="UPA00315">
    <property type="reaction ID" value="UER00080"/>
</dbReference>
<dbReference type="Proteomes" id="UP000000653">
    <property type="component" value="Chromosome"/>
</dbReference>
<dbReference type="GO" id="GO:0005737">
    <property type="term" value="C:cytoplasm"/>
    <property type="evidence" value="ECO:0007669"/>
    <property type="project" value="UniProtKB-SubCell"/>
</dbReference>
<dbReference type="GO" id="GO:0005524">
    <property type="term" value="F:ATP binding"/>
    <property type="evidence" value="ECO:0007669"/>
    <property type="project" value="UniProtKB-UniRule"/>
</dbReference>
<dbReference type="GO" id="GO:0000287">
    <property type="term" value="F:magnesium ion binding"/>
    <property type="evidence" value="ECO:0007669"/>
    <property type="project" value="UniProtKB-UniRule"/>
</dbReference>
<dbReference type="GO" id="GO:0004478">
    <property type="term" value="F:methionine adenosyltransferase activity"/>
    <property type="evidence" value="ECO:0007669"/>
    <property type="project" value="UniProtKB-UniRule"/>
</dbReference>
<dbReference type="GO" id="GO:0006730">
    <property type="term" value="P:one-carbon metabolic process"/>
    <property type="evidence" value="ECO:0007669"/>
    <property type="project" value="UniProtKB-KW"/>
</dbReference>
<dbReference type="GO" id="GO:0006556">
    <property type="term" value="P:S-adenosylmethionine biosynthetic process"/>
    <property type="evidence" value="ECO:0007669"/>
    <property type="project" value="UniProtKB-UniRule"/>
</dbReference>
<dbReference type="CDD" id="cd18079">
    <property type="entry name" value="S-AdoMet_synt"/>
    <property type="match status" value="1"/>
</dbReference>
<dbReference type="FunFam" id="3.30.300.10:FF:000003">
    <property type="entry name" value="S-adenosylmethionine synthase"/>
    <property type="match status" value="1"/>
</dbReference>
<dbReference type="Gene3D" id="3.30.300.10">
    <property type="match status" value="3"/>
</dbReference>
<dbReference type="HAMAP" id="MF_00086">
    <property type="entry name" value="S_AdoMet_synth1"/>
    <property type="match status" value="1"/>
</dbReference>
<dbReference type="InterPro" id="IPR022631">
    <property type="entry name" value="ADOMET_SYNTHASE_CS"/>
</dbReference>
<dbReference type="InterPro" id="IPR022630">
    <property type="entry name" value="S-AdoMet_synt_C"/>
</dbReference>
<dbReference type="InterPro" id="IPR022629">
    <property type="entry name" value="S-AdoMet_synt_central"/>
</dbReference>
<dbReference type="InterPro" id="IPR022628">
    <property type="entry name" value="S-AdoMet_synt_N"/>
</dbReference>
<dbReference type="InterPro" id="IPR002133">
    <property type="entry name" value="S-AdoMet_synthetase"/>
</dbReference>
<dbReference type="InterPro" id="IPR022636">
    <property type="entry name" value="S-AdoMet_synthetase_sfam"/>
</dbReference>
<dbReference type="NCBIfam" id="TIGR01034">
    <property type="entry name" value="metK"/>
    <property type="match status" value="1"/>
</dbReference>
<dbReference type="PANTHER" id="PTHR11964">
    <property type="entry name" value="S-ADENOSYLMETHIONINE SYNTHETASE"/>
    <property type="match status" value="1"/>
</dbReference>
<dbReference type="Pfam" id="PF02773">
    <property type="entry name" value="S-AdoMet_synt_C"/>
    <property type="match status" value="1"/>
</dbReference>
<dbReference type="Pfam" id="PF02772">
    <property type="entry name" value="S-AdoMet_synt_M"/>
    <property type="match status" value="1"/>
</dbReference>
<dbReference type="Pfam" id="PF00438">
    <property type="entry name" value="S-AdoMet_synt_N"/>
    <property type="match status" value="1"/>
</dbReference>
<dbReference type="PIRSF" id="PIRSF000497">
    <property type="entry name" value="MAT"/>
    <property type="match status" value="1"/>
</dbReference>
<dbReference type="SUPFAM" id="SSF55973">
    <property type="entry name" value="S-adenosylmethionine synthetase"/>
    <property type="match status" value="3"/>
</dbReference>
<dbReference type="PROSITE" id="PS00376">
    <property type="entry name" value="ADOMET_SYNTHASE_1"/>
    <property type="match status" value="1"/>
</dbReference>
<dbReference type="PROSITE" id="PS00377">
    <property type="entry name" value="ADOMET_SYNTHASE_2"/>
    <property type="match status" value="1"/>
</dbReference>
<proteinExistence type="inferred from homology"/>
<reference key="1">
    <citation type="journal article" date="2006" name="Genome Biol.">
        <title>Genomic analysis reveals that Pseudomonas aeruginosa virulence is combinatorial.</title>
        <authorList>
            <person name="Lee D.G."/>
            <person name="Urbach J.M."/>
            <person name="Wu G."/>
            <person name="Liberati N.T."/>
            <person name="Feinbaum R.L."/>
            <person name="Miyata S."/>
            <person name="Diggins L.T."/>
            <person name="He J."/>
            <person name="Saucier M."/>
            <person name="Deziel E."/>
            <person name="Friedman L."/>
            <person name="Li L."/>
            <person name="Grills G."/>
            <person name="Montgomery K."/>
            <person name="Kucherlapati R."/>
            <person name="Rahme L.G."/>
            <person name="Ausubel F.M."/>
        </authorList>
    </citation>
    <scope>NUCLEOTIDE SEQUENCE [LARGE SCALE GENOMIC DNA]</scope>
    <source>
        <strain>UCBPP-PA14</strain>
    </source>
</reference>
<evidence type="ECO:0000255" key="1">
    <source>
        <dbReference type="HAMAP-Rule" id="MF_00086"/>
    </source>
</evidence>
<gene>
    <name evidence="1" type="primary">metK</name>
    <name type="ordered locus">PA14_07090</name>
</gene>
<sequence length="396" mass="42709">MSEYSVFTSESVSEGHPDKIADQISDAVLDAIIAKDKYARVACETLVKTGVAIIAGEVTTSAWVDLEELVRKVIIDIGYDSSDVGFDGATCGVLNIIGKQSVDINQGVDRAKPEDQGAGDQGLMFGYASNETDVLMPAPICFSHRLVERQAEARKSGLLPWLRPDAKSQVTCRYEGGKVVGIDAVVLSTQHNPEVSYNDLRDGVMELIIKQVLPAELLHKDTQFHINPTGNFVIGGPVGDCGLTGRKIIVDSYGGMARHGGGAFSGKDPSKVDRSAAYAGRYVAKNIVAAGLAERCEIQVSYAIGVAQPTSISINTFGTGKVSDEKIVQLVREHFDLRPYAITKMLDLLHPMYQPTAAYGHFGRHPFELTVDGDTFTAFTWEKTDKAALLRDAAGL</sequence>
<accession>Q02TL9</accession>
<keyword id="KW-0067">ATP-binding</keyword>
<keyword id="KW-0963">Cytoplasm</keyword>
<keyword id="KW-0460">Magnesium</keyword>
<keyword id="KW-0479">Metal-binding</keyword>
<keyword id="KW-0547">Nucleotide-binding</keyword>
<keyword id="KW-0554">One-carbon metabolism</keyword>
<keyword id="KW-0630">Potassium</keyword>
<keyword id="KW-0808">Transferase</keyword>
<feature type="chain" id="PRO_0000302964" description="S-adenosylmethionine synthase">
    <location>
        <begin position="1"/>
        <end position="396"/>
    </location>
</feature>
<feature type="region of interest" description="Flexible loop" evidence="1">
    <location>
        <begin position="100"/>
        <end position="110"/>
    </location>
</feature>
<feature type="binding site" description="in other chain" evidence="1">
    <location>
        <position position="16"/>
    </location>
    <ligand>
        <name>ATP</name>
        <dbReference type="ChEBI" id="CHEBI:30616"/>
        <note>ligand shared between two neighboring subunits</note>
    </ligand>
</feature>
<feature type="binding site" evidence="1">
    <location>
        <position position="18"/>
    </location>
    <ligand>
        <name>Mg(2+)</name>
        <dbReference type="ChEBI" id="CHEBI:18420"/>
    </ligand>
</feature>
<feature type="binding site" evidence="1">
    <location>
        <position position="44"/>
    </location>
    <ligand>
        <name>K(+)</name>
        <dbReference type="ChEBI" id="CHEBI:29103"/>
    </ligand>
</feature>
<feature type="binding site" description="in other chain" evidence="1">
    <location>
        <position position="57"/>
    </location>
    <ligand>
        <name>L-methionine</name>
        <dbReference type="ChEBI" id="CHEBI:57844"/>
        <note>ligand shared between two neighboring subunits</note>
    </ligand>
</feature>
<feature type="binding site" description="in other chain" evidence="1">
    <location>
        <position position="100"/>
    </location>
    <ligand>
        <name>L-methionine</name>
        <dbReference type="ChEBI" id="CHEBI:57844"/>
        <note>ligand shared between two neighboring subunits</note>
    </ligand>
</feature>
<feature type="binding site" description="in other chain" evidence="1">
    <location>
        <begin position="165"/>
        <end position="167"/>
    </location>
    <ligand>
        <name>ATP</name>
        <dbReference type="ChEBI" id="CHEBI:30616"/>
        <note>ligand shared between two neighboring subunits</note>
    </ligand>
</feature>
<feature type="binding site" evidence="1">
    <location>
        <position position="240"/>
    </location>
    <ligand>
        <name>ATP</name>
        <dbReference type="ChEBI" id="CHEBI:30616"/>
        <note>ligand shared between two neighboring subunits</note>
    </ligand>
</feature>
<feature type="binding site" evidence="1">
    <location>
        <position position="240"/>
    </location>
    <ligand>
        <name>L-methionine</name>
        <dbReference type="ChEBI" id="CHEBI:57844"/>
        <note>ligand shared between two neighboring subunits</note>
    </ligand>
</feature>
<feature type="binding site" description="in other chain" evidence="1">
    <location>
        <begin position="246"/>
        <end position="247"/>
    </location>
    <ligand>
        <name>ATP</name>
        <dbReference type="ChEBI" id="CHEBI:30616"/>
        <note>ligand shared between two neighboring subunits</note>
    </ligand>
</feature>
<feature type="binding site" evidence="1">
    <location>
        <position position="263"/>
    </location>
    <ligand>
        <name>ATP</name>
        <dbReference type="ChEBI" id="CHEBI:30616"/>
        <note>ligand shared between two neighboring subunits</note>
    </ligand>
</feature>
<feature type="binding site" evidence="1">
    <location>
        <position position="267"/>
    </location>
    <ligand>
        <name>ATP</name>
        <dbReference type="ChEBI" id="CHEBI:30616"/>
        <note>ligand shared between two neighboring subunits</note>
    </ligand>
</feature>
<feature type="binding site" description="in other chain" evidence="1">
    <location>
        <position position="271"/>
    </location>
    <ligand>
        <name>L-methionine</name>
        <dbReference type="ChEBI" id="CHEBI:57844"/>
        <note>ligand shared between two neighboring subunits</note>
    </ligand>
</feature>
<comment type="function">
    <text evidence="1">Catalyzes the formation of S-adenosylmethionine (AdoMet) from methionine and ATP. The overall synthetic reaction is composed of two sequential steps, AdoMet formation and the subsequent tripolyphosphate hydrolysis which occurs prior to release of AdoMet from the enzyme.</text>
</comment>
<comment type="catalytic activity">
    <reaction evidence="1">
        <text>L-methionine + ATP + H2O = S-adenosyl-L-methionine + phosphate + diphosphate</text>
        <dbReference type="Rhea" id="RHEA:21080"/>
        <dbReference type="ChEBI" id="CHEBI:15377"/>
        <dbReference type="ChEBI" id="CHEBI:30616"/>
        <dbReference type="ChEBI" id="CHEBI:33019"/>
        <dbReference type="ChEBI" id="CHEBI:43474"/>
        <dbReference type="ChEBI" id="CHEBI:57844"/>
        <dbReference type="ChEBI" id="CHEBI:59789"/>
        <dbReference type="EC" id="2.5.1.6"/>
    </reaction>
</comment>
<comment type="cofactor">
    <cofactor evidence="1">
        <name>Mg(2+)</name>
        <dbReference type="ChEBI" id="CHEBI:18420"/>
    </cofactor>
    <text evidence="1">Binds 2 divalent ions per subunit.</text>
</comment>
<comment type="cofactor">
    <cofactor evidence="1">
        <name>K(+)</name>
        <dbReference type="ChEBI" id="CHEBI:29103"/>
    </cofactor>
    <text evidence="1">Binds 1 potassium ion per subunit.</text>
</comment>
<comment type="pathway">
    <text evidence="1">Amino-acid biosynthesis; S-adenosyl-L-methionine biosynthesis; S-adenosyl-L-methionine from L-methionine: step 1/1.</text>
</comment>
<comment type="subunit">
    <text evidence="1">Homotetramer; dimer of dimers.</text>
</comment>
<comment type="subcellular location">
    <subcellularLocation>
        <location evidence="1">Cytoplasm</location>
    </subcellularLocation>
</comment>
<comment type="similarity">
    <text evidence="1">Belongs to the AdoMet synthase family.</text>
</comment>
<organism>
    <name type="scientific">Pseudomonas aeruginosa (strain UCBPP-PA14)</name>
    <dbReference type="NCBI Taxonomy" id="208963"/>
    <lineage>
        <taxon>Bacteria</taxon>
        <taxon>Pseudomonadati</taxon>
        <taxon>Pseudomonadota</taxon>
        <taxon>Gammaproteobacteria</taxon>
        <taxon>Pseudomonadales</taxon>
        <taxon>Pseudomonadaceae</taxon>
        <taxon>Pseudomonas</taxon>
    </lineage>
</organism>